<proteinExistence type="evidence at protein level"/>
<protein>
    <recommendedName>
        <fullName>Myosin regulatory light chain</fullName>
    </recommendedName>
    <alternativeName>
        <fullName>Calcium-binding light chain</fullName>
    </alternativeName>
</protein>
<reference key="1">
    <citation type="journal article" date="1988" name="J. Biol. Chem.">
        <title>Amino acid sequence of the calcium-binding light chain of myosin from the lower eukaryote, Physarum polycephalum.</title>
        <authorList>
            <person name="Kobayashi T."/>
            <person name="Takagi T."/>
            <person name="Konishi K."/>
            <person name="Hamada Y."/>
            <person name="Kawagushi M."/>
            <person name="Kohama K."/>
        </authorList>
    </citation>
    <scope>PROTEIN SEQUENCE</scope>
    <scope>NUCLEOTIDE SEQUENCE OF 2-147</scope>
    <scope>ACETYLATION AT THR-1</scope>
</reference>
<feature type="chain" id="PRO_0000198758" description="Myosin regulatory light chain">
    <location>
        <begin position="1"/>
        <end position="147"/>
    </location>
</feature>
<feature type="domain" description="EF-hand 1" evidence="1">
    <location>
        <begin position="2"/>
        <end position="37"/>
    </location>
</feature>
<feature type="domain" description="EF-hand 2" evidence="1">
    <location>
        <begin position="73"/>
        <end position="108"/>
    </location>
</feature>
<feature type="domain" description="EF-hand 3" evidence="1">
    <location>
        <begin position="109"/>
        <end position="144"/>
    </location>
</feature>
<feature type="binding site" evidence="1">
    <location>
        <position position="15"/>
    </location>
    <ligand>
        <name>Ca(2+)</name>
        <dbReference type="ChEBI" id="CHEBI:29108"/>
        <label>1</label>
    </ligand>
</feature>
<feature type="binding site" evidence="1">
    <location>
        <position position="17"/>
    </location>
    <ligand>
        <name>Ca(2+)</name>
        <dbReference type="ChEBI" id="CHEBI:29108"/>
        <label>1</label>
    </ligand>
</feature>
<feature type="binding site" evidence="1">
    <location>
        <position position="19"/>
    </location>
    <ligand>
        <name>Ca(2+)</name>
        <dbReference type="ChEBI" id="CHEBI:29108"/>
        <label>1</label>
    </ligand>
</feature>
<feature type="binding site" evidence="1">
    <location>
        <position position="21"/>
    </location>
    <ligand>
        <name>Ca(2+)</name>
        <dbReference type="ChEBI" id="CHEBI:29108"/>
        <label>1</label>
    </ligand>
</feature>
<feature type="binding site" evidence="1">
    <location>
        <position position="26"/>
    </location>
    <ligand>
        <name>Ca(2+)</name>
        <dbReference type="ChEBI" id="CHEBI:29108"/>
        <label>1</label>
    </ligand>
</feature>
<feature type="binding site" evidence="3">
    <location>
        <position position="86"/>
    </location>
    <ligand>
        <name>Ca(2+)</name>
        <dbReference type="ChEBI" id="CHEBI:29108"/>
        <label>2</label>
    </ligand>
</feature>
<feature type="binding site" evidence="3">
    <location>
        <position position="90"/>
    </location>
    <ligand>
        <name>Ca(2+)</name>
        <dbReference type="ChEBI" id="CHEBI:29108"/>
        <label>2</label>
    </ligand>
</feature>
<feature type="binding site" evidence="3">
    <location>
        <position position="92"/>
    </location>
    <ligand>
        <name>Ca(2+)</name>
        <dbReference type="ChEBI" id="CHEBI:29108"/>
        <label>2</label>
    </ligand>
</feature>
<feature type="binding site" evidence="3">
    <location>
        <position position="97"/>
    </location>
    <ligand>
        <name>Ca(2+)</name>
        <dbReference type="ChEBI" id="CHEBI:29108"/>
        <label>2</label>
    </ligand>
</feature>
<feature type="modified residue" description="N-acetylthreonine" evidence="2">
    <location>
        <position position="1"/>
    </location>
</feature>
<feature type="helix" evidence="4">
    <location>
        <begin position="4"/>
        <end position="14"/>
    </location>
</feature>
<feature type="helix" evidence="4">
    <location>
        <begin position="24"/>
        <end position="26"/>
    </location>
</feature>
<feature type="helix" evidence="4">
    <location>
        <begin position="27"/>
        <end position="33"/>
    </location>
</feature>
<feature type="helix" evidence="4">
    <location>
        <begin position="40"/>
        <end position="50"/>
    </location>
</feature>
<feature type="strand" evidence="4">
    <location>
        <begin position="52"/>
        <end position="55"/>
    </location>
</feature>
<feature type="helix" evidence="4">
    <location>
        <begin position="57"/>
        <end position="64"/>
    </location>
</feature>
<feature type="helix" evidence="4">
    <location>
        <begin position="71"/>
        <end position="74"/>
    </location>
</feature>
<feature type="helix" evidence="4">
    <location>
        <begin position="75"/>
        <end position="85"/>
    </location>
</feature>
<feature type="strand" evidence="4">
    <location>
        <begin position="87"/>
        <end position="94"/>
    </location>
</feature>
<feature type="helix" evidence="4">
    <location>
        <begin position="95"/>
        <end position="104"/>
    </location>
</feature>
<feature type="strand" evidence="4">
    <location>
        <begin position="105"/>
        <end position="107"/>
    </location>
</feature>
<feature type="helix" evidence="4">
    <location>
        <begin position="111"/>
        <end position="118"/>
    </location>
</feature>
<feature type="strand" evidence="4">
    <location>
        <begin position="127"/>
        <end position="130"/>
    </location>
</feature>
<feature type="helix" evidence="4">
    <location>
        <begin position="131"/>
        <end position="140"/>
    </location>
</feature>
<sequence length="147" mass="16081">TASADQIQECFQIFDKDNDGKVSIEELGSALRSLGKNPTNAELNTIKGQLNAKEFDLATFKTVYRKPIKTPTEQSKEMLDAFRALDKEGNGTIQEAELRQLLLNLGDALTSSEVEELMKEVSVSGDGAINYESFVDMLVTGYPLASA</sequence>
<keyword id="KW-0002">3D-structure</keyword>
<keyword id="KW-0007">Acetylation</keyword>
<keyword id="KW-0106">Calcium</keyword>
<keyword id="KW-0903">Direct protein sequencing</keyword>
<keyword id="KW-0479">Metal-binding</keyword>
<keyword id="KW-0505">Motor protein</keyword>
<keyword id="KW-0518">Myosin</keyword>
<keyword id="KW-0677">Repeat</keyword>
<name>MLR_PHYPO</name>
<comment type="miscellaneous">
    <text>This chain binds two moles of calcium.</text>
</comment>
<dbReference type="EMBL" id="J03499">
    <property type="protein sequence ID" value="AAA29978.1"/>
    <property type="molecule type" value="mRNA"/>
</dbReference>
<dbReference type="PIR" id="A29910">
    <property type="entry name" value="A29910"/>
</dbReference>
<dbReference type="PDB" id="2BL0">
    <property type="method" value="X-ray"/>
    <property type="resolution" value="1.75 A"/>
    <property type="chains" value="B=1-145"/>
</dbReference>
<dbReference type="PDBsum" id="2BL0"/>
<dbReference type="SMR" id="P08053"/>
<dbReference type="iPTMnet" id="P08053"/>
<dbReference type="EvolutionaryTrace" id="P08053"/>
<dbReference type="GO" id="GO:0016460">
    <property type="term" value="C:myosin II complex"/>
    <property type="evidence" value="ECO:0007669"/>
    <property type="project" value="TreeGrafter"/>
</dbReference>
<dbReference type="GO" id="GO:0005509">
    <property type="term" value="F:calcium ion binding"/>
    <property type="evidence" value="ECO:0007669"/>
    <property type="project" value="InterPro"/>
</dbReference>
<dbReference type="CDD" id="cd00051">
    <property type="entry name" value="EFh"/>
    <property type="match status" value="1"/>
</dbReference>
<dbReference type="FunFam" id="1.10.238.10:FF:000001">
    <property type="entry name" value="Calmodulin 1"/>
    <property type="match status" value="1"/>
</dbReference>
<dbReference type="Gene3D" id="1.10.238.10">
    <property type="entry name" value="EF-hand"/>
    <property type="match status" value="2"/>
</dbReference>
<dbReference type="InterPro" id="IPR050230">
    <property type="entry name" value="CALM/Myosin/TropC-like"/>
</dbReference>
<dbReference type="InterPro" id="IPR011992">
    <property type="entry name" value="EF-hand-dom_pair"/>
</dbReference>
<dbReference type="InterPro" id="IPR018247">
    <property type="entry name" value="EF_Hand_1_Ca_BS"/>
</dbReference>
<dbReference type="InterPro" id="IPR002048">
    <property type="entry name" value="EF_hand_dom"/>
</dbReference>
<dbReference type="PANTHER" id="PTHR23048:SF0">
    <property type="entry name" value="CALMODULIN LIKE 3"/>
    <property type="match status" value="1"/>
</dbReference>
<dbReference type="PANTHER" id="PTHR23048">
    <property type="entry name" value="MYOSIN LIGHT CHAIN 1, 3"/>
    <property type="match status" value="1"/>
</dbReference>
<dbReference type="Pfam" id="PF13405">
    <property type="entry name" value="EF-hand_6"/>
    <property type="match status" value="1"/>
</dbReference>
<dbReference type="Pfam" id="PF13499">
    <property type="entry name" value="EF-hand_7"/>
    <property type="match status" value="1"/>
</dbReference>
<dbReference type="SMART" id="SM00054">
    <property type="entry name" value="EFh"/>
    <property type="match status" value="3"/>
</dbReference>
<dbReference type="SUPFAM" id="SSF47473">
    <property type="entry name" value="EF-hand"/>
    <property type="match status" value="1"/>
</dbReference>
<dbReference type="PROSITE" id="PS00018">
    <property type="entry name" value="EF_HAND_1"/>
    <property type="match status" value="1"/>
</dbReference>
<dbReference type="PROSITE" id="PS50222">
    <property type="entry name" value="EF_HAND_2"/>
    <property type="match status" value="3"/>
</dbReference>
<organism>
    <name type="scientific">Physarum polycephalum</name>
    <name type="common">Slime mold</name>
    <dbReference type="NCBI Taxonomy" id="5791"/>
    <lineage>
        <taxon>Eukaryota</taxon>
        <taxon>Amoebozoa</taxon>
        <taxon>Evosea</taxon>
        <taxon>Eumycetozoa</taxon>
        <taxon>Myxogastria</taxon>
        <taxon>Myxogastromycetidae</taxon>
        <taxon>Physariida</taxon>
        <taxon>Physaraceae</taxon>
        <taxon>Physarum</taxon>
    </lineage>
</organism>
<accession>P08053</accession>
<evidence type="ECO:0000255" key="1">
    <source>
        <dbReference type="PROSITE-ProRule" id="PRU00448"/>
    </source>
</evidence>
<evidence type="ECO:0000269" key="2">
    <source>
    </source>
</evidence>
<evidence type="ECO:0000305" key="3"/>
<evidence type="ECO:0007829" key="4">
    <source>
        <dbReference type="PDB" id="2BL0"/>
    </source>
</evidence>